<accession>Q0SF42</accession>
<reference key="1">
    <citation type="journal article" date="2006" name="Proc. Natl. Acad. Sci. U.S.A.">
        <title>The complete genome of Rhodococcus sp. RHA1 provides insights into a catabolic powerhouse.</title>
        <authorList>
            <person name="McLeod M.P."/>
            <person name="Warren R.L."/>
            <person name="Hsiao W.W.L."/>
            <person name="Araki N."/>
            <person name="Myhre M."/>
            <person name="Fernandes C."/>
            <person name="Miyazawa D."/>
            <person name="Wong W."/>
            <person name="Lillquist A.L."/>
            <person name="Wang D."/>
            <person name="Dosanjh M."/>
            <person name="Hara H."/>
            <person name="Petrescu A."/>
            <person name="Morin R.D."/>
            <person name="Yang G."/>
            <person name="Stott J.M."/>
            <person name="Schein J.E."/>
            <person name="Shin H."/>
            <person name="Smailus D."/>
            <person name="Siddiqui A.S."/>
            <person name="Marra M.A."/>
            <person name="Jones S.J.M."/>
            <person name="Holt R."/>
            <person name="Brinkman F.S.L."/>
            <person name="Miyauchi K."/>
            <person name="Fukuda M."/>
            <person name="Davies J.E."/>
            <person name="Mohn W.W."/>
            <person name="Eltis L.D."/>
        </authorList>
    </citation>
    <scope>NUCLEOTIDE SEQUENCE [LARGE SCALE GENOMIC DNA]</scope>
    <source>
        <strain>RHA1</strain>
    </source>
</reference>
<keyword id="KW-0963">Cytoplasm</keyword>
<keyword id="KW-0413">Isomerase</keyword>
<keyword id="KW-0627">Porphyrin biosynthesis</keyword>
<keyword id="KW-0663">Pyridoxal phosphate</keyword>
<organism>
    <name type="scientific">Rhodococcus jostii (strain RHA1)</name>
    <dbReference type="NCBI Taxonomy" id="101510"/>
    <lineage>
        <taxon>Bacteria</taxon>
        <taxon>Bacillati</taxon>
        <taxon>Actinomycetota</taxon>
        <taxon>Actinomycetes</taxon>
        <taxon>Mycobacteriales</taxon>
        <taxon>Nocardiaceae</taxon>
        <taxon>Rhodococcus</taxon>
    </lineage>
</organism>
<evidence type="ECO:0000255" key="1">
    <source>
        <dbReference type="HAMAP-Rule" id="MF_00375"/>
    </source>
</evidence>
<dbReference type="EC" id="5.4.3.8" evidence="1"/>
<dbReference type="EMBL" id="CP000431">
    <property type="protein sequence ID" value="ABG93844.1"/>
    <property type="molecule type" value="Genomic_DNA"/>
</dbReference>
<dbReference type="RefSeq" id="WP_011594894.1">
    <property type="nucleotide sequence ID" value="NC_008268.1"/>
</dbReference>
<dbReference type="SMR" id="Q0SF42"/>
<dbReference type="KEGG" id="rha:RHA1_ro02037"/>
<dbReference type="PATRIC" id="fig|101510.16.peg.2061"/>
<dbReference type="eggNOG" id="COG0001">
    <property type="taxonomic scope" value="Bacteria"/>
</dbReference>
<dbReference type="HOGENOM" id="CLU_016922_1_5_11"/>
<dbReference type="OrthoDB" id="9801052at2"/>
<dbReference type="UniPathway" id="UPA00251">
    <property type="reaction ID" value="UER00317"/>
</dbReference>
<dbReference type="Proteomes" id="UP000008710">
    <property type="component" value="Chromosome"/>
</dbReference>
<dbReference type="GO" id="GO:0005737">
    <property type="term" value="C:cytoplasm"/>
    <property type="evidence" value="ECO:0007669"/>
    <property type="project" value="UniProtKB-SubCell"/>
</dbReference>
<dbReference type="GO" id="GO:0042286">
    <property type="term" value="F:glutamate-1-semialdehyde 2,1-aminomutase activity"/>
    <property type="evidence" value="ECO:0007669"/>
    <property type="project" value="UniProtKB-UniRule"/>
</dbReference>
<dbReference type="GO" id="GO:0030170">
    <property type="term" value="F:pyridoxal phosphate binding"/>
    <property type="evidence" value="ECO:0007669"/>
    <property type="project" value="InterPro"/>
</dbReference>
<dbReference type="GO" id="GO:0008483">
    <property type="term" value="F:transaminase activity"/>
    <property type="evidence" value="ECO:0007669"/>
    <property type="project" value="InterPro"/>
</dbReference>
<dbReference type="GO" id="GO:0006782">
    <property type="term" value="P:protoporphyrinogen IX biosynthetic process"/>
    <property type="evidence" value="ECO:0007669"/>
    <property type="project" value="UniProtKB-UniRule"/>
</dbReference>
<dbReference type="CDD" id="cd00610">
    <property type="entry name" value="OAT_like"/>
    <property type="match status" value="1"/>
</dbReference>
<dbReference type="FunFam" id="3.40.640.10:FF:000021">
    <property type="entry name" value="Glutamate-1-semialdehyde 2,1-aminomutase"/>
    <property type="match status" value="1"/>
</dbReference>
<dbReference type="Gene3D" id="3.90.1150.10">
    <property type="entry name" value="Aspartate Aminotransferase, domain 1"/>
    <property type="match status" value="1"/>
</dbReference>
<dbReference type="Gene3D" id="3.40.640.10">
    <property type="entry name" value="Type I PLP-dependent aspartate aminotransferase-like (Major domain)"/>
    <property type="match status" value="1"/>
</dbReference>
<dbReference type="HAMAP" id="MF_00375">
    <property type="entry name" value="HemL_aminotrans_3"/>
    <property type="match status" value="1"/>
</dbReference>
<dbReference type="InterPro" id="IPR004639">
    <property type="entry name" value="4pyrrol_synth_GluAld_NH2Trfase"/>
</dbReference>
<dbReference type="InterPro" id="IPR005814">
    <property type="entry name" value="Aminotrans_3"/>
</dbReference>
<dbReference type="InterPro" id="IPR049704">
    <property type="entry name" value="Aminotrans_3_PPA_site"/>
</dbReference>
<dbReference type="InterPro" id="IPR015424">
    <property type="entry name" value="PyrdxlP-dep_Trfase"/>
</dbReference>
<dbReference type="InterPro" id="IPR015421">
    <property type="entry name" value="PyrdxlP-dep_Trfase_major"/>
</dbReference>
<dbReference type="InterPro" id="IPR015422">
    <property type="entry name" value="PyrdxlP-dep_Trfase_small"/>
</dbReference>
<dbReference type="NCBIfam" id="TIGR00713">
    <property type="entry name" value="hemL"/>
    <property type="match status" value="1"/>
</dbReference>
<dbReference type="NCBIfam" id="NF000818">
    <property type="entry name" value="PRK00062.1"/>
    <property type="match status" value="1"/>
</dbReference>
<dbReference type="PANTHER" id="PTHR43713">
    <property type="entry name" value="GLUTAMATE-1-SEMIALDEHYDE 2,1-AMINOMUTASE"/>
    <property type="match status" value="1"/>
</dbReference>
<dbReference type="PANTHER" id="PTHR43713:SF3">
    <property type="entry name" value="GLUTAMATE-1-SEMIALDEHYDE 2,1-AMINOMUTASE 1, CHLOROPLASTIC-RELATED"/>
    <property type="match status" value="1"/>
</dbReference>
<dbReference type="Pfam" id="PF00202">
    <property type="entry name" value="Aminotran_3"/>
    <property type="match status" value="1"/>
</dbReference>
<dbReference type="SUPFAM" id="SSF53383">
    <property type="entry name" value="PLP-dependent transferases"/>
    <property type="match status" value="1"/>
</dbReference>
<dbReference type="PROSITE" id="PS00600">
    <property type="entry name" value="AA_TRANSFER_CLASS_3"/>
    <property type="match status" value="1"/>
</dbReference>
<gene>
    <name evidence="1" type="primary">hemL</name>
    <name type="ordered locus">RHA1_ro02037</name>
</gene>
<proteinExistence type="inferred from homology"/>
<sequence length="441" mass="45450">MTVSSGDPDVHASRSAQLFERADLVIPGGVNSPVRAFHSVGGTPRFIKEASGYTLTDVDGNDYVDLICSWGPMILGHAHPAVVEAVQKAAATGLSFGAPTEGEIELAEEIVGRVAPVEKVRLVNSGTEATMSAVRLARGFTGRTKVLKFSGCYHGHVDALLADAGSGLATFGLPTSPGVTGAQAEDTIVVPYNDLDAVAQAFAANEGRIACVITEAAAGNMGAVAPQPGFNEGLRKLTSDNGALLIMDEVMTGFRVSSAGWFGLDGVAGDLYTFGKVMSGGLPAAAFGGRADVMAHLAPAGPVYQAGTLSGNPVAVAAGLASLRAADQGVYDALERNSATLRTLLSDALTAESVPHRVQTAGTMLSVFFSEDPVTNYAEAKAAQTWRFPAFFHGLLSRGVYPPPSAFEAWFVSAAMDDRAFSIIADALPHAAKAAAAAVQP</sequence>
<comment type="catalytic activity">
    <reaction evidence="1">
        <text>(S)-4-amino-5-oxopentanoate = 5-aminolevulinate</text>
        <dbReference type="Rhea" id="RHEA:14265"/>
        <dbReference type="ChEBI" id="CHEBI:57501"/>
        <dbReference type="ChEBI" id="CHEBI:356416"/>
        <dbReference type="EC" id="5.4.3.8"/>
    </reaction>
</comment>
<comment type="cofactor">
    <cofactor evidence="1">
        <name>pyridoxal 5'-phosphate</name>
        <dbReference type="ChEBI" id="CHEBI:597326"/>
    </cofactor>
</comment>
<comment type="pathway">
    <text evidence="1">Porphyrin-containing compound metabolism; protoporphyrin-IX biosynthesis; 5-aminolevulinate from L-glutamyl-tRNA(Glu): step 2/2.</text>
</comment>
<comment type="subunit">
    <text evidence="1">Homodimer.</text>
</comment>
<comment type="subcellular location">
    <subcellularLocation>
        <location evidence="1">Cytoplasm</location>
    </subcellularLocation>
</comment>
<comment type="similarity">
    <text evidence="1">Belongs to the class-III pyridoxal-phosphate-dependent aminotransferase family. HemL subfamily.</text>
</comment>
<feature type="chain" id="PRO_0000300942" description="Glutamate-1-semialdehyde 2,1-aminomutase">
    <location>
        <begin position="1"/>
        <end position="441"/>
    </location>
</feature>
<feature type="modified residue" description="N6-(pyridoxal phosphate)lysine" evidence="1">
    <location>
        <position position="276"/>
    </location>
</feature>
<name>GSA_RHOJR</name>
<protein>
    <recommendedName>
        <fullName evidence="1">Glutamate-1-semialdehyde 2,1-aminomutase</fullName>
        <shortName evidence="1">GSA</shortName>
        <ecNumber evidence="1">5.4.3.8</ecNumber>
    </recommendedName>
    <alternativeName>
        <fullName evidence="1">Glutamate-1-semialdehyde aminotransferase</fullName>
        <shortName evidence="1">GSA-AT</shortName>
    </alternativeName>
</protein>